<evidence type="ECO:0000269" key="1">
    <source>
    </source>
</evidence>
<evidence type="ECO:0000269" key="2">
    <source>
    </source>
</evidence>
<evidence type="ECO:0000269" key="3">
    <source ref="1"/>
</evidence>
<evidence type="ECO:0000305" key="4"/>
<evidence type="ECO:0007829" key="5">
    <source>
        <dbReference type="PDB" id="3M9W"/>
    </source>
</evidence>
<protein>
    <recommendedName>
        <fullName>D-xylose-binding periplasmic protein</fullName>
    </recommendedName>
</protein>
<gene>
    <name type="primary">xylF</name>
    <name type="synonym">xylT</name>
    <name type="ordered locus">b3566</name>
    <name type="ordered locus">JW3538</name>
</gene>
<reference key="1">
    <citation type="journal article" date="1989" name="Biochem. Soc. Trans.">
        <title>The D-xylose binding protein of Escherichia coli.</title>
        <authorList>
            <person name="Sumiya M."/>
            <person name="Henderson P.J.F."/>
        </authorList>
    </citation>
    <scope>NUCLEOTIDE SEQUENCE [GENOMIC DNA]</scope>
    <scope>PROTEIN SEQUENCE OF 24-67</scope>
</reference>
<reference key="2">
    <citation type="journal article" date="1994" name="Nucleic Acids Res.">
        <title>Analysis of the Escherichia coli genome. V. DNA sequence of the region from 76.0 to 81.5 minutes.</title>
        <authorList>
            <person name="Sofia H.J."/>
            <person name="Burland V."/>
            <person name="Daniels D.L."/>
            <person name="Plunkett G. III"/>
            <person name="Blattner F.R."/>
        </authorList>
    </citation>
    <scope>NUCLEOTIDE SEQUENCE [LARGE SCALE GENOMIC DNA]</scope>
    <source>
        <strain>K12 / MG1655 / ATCC 47076</strain>
    </source>
</reference>
<reference key="3">
    <citation type="journal article" date="1997" name="Science">
        <title>The complete genome sequence of Escherichia coli K-12.</title>
        <authorList>
            <person name="Blattner F.R."/>
            <person name="Plunkett G. III"/>
            <person name="Bloch C.A."/>
            <person name="Perna N.T."/>
            <person name="Burland V."/>
            <person name="Riley M."/>
            <person name="Collado-Vides J."/>
            <person name="Glasner J.D."/>
            <person name="Rode C.K."/>
            <person name="Mayhew G.F."/>
            <person name="Gregor J."/>
            <person name="Davis N.W."/>
            <person name="Kirkpatrick H.A."/>
            <person name="Goeden M.A."/>
            <person name="Rose D.J."/>
            <person name="Mau B."/>
            <person name="Shao Y."/>
        </authorList>
    </citation>
    <scope>NUCLEOTIDE SEQUENCE [LARGE SCALE GENOMIC DNA]</scope>
    <source>
        <strain>K12 / MG1655 / ATCC 47076</strain>
    </source>
</reference>
<reference key="4">
    <citation type="journal article" date="2006" name="Mol. Syst. Biol.">
        <title>Highly accurate genome sequences of Escherichia coli K-12 strains MG1655 and W3110.</title>
        <authorList>
            <person name="Hayashi K."/>
            <person name="Morooka N."/>
            <person name="Yamamoto Y."/>
            <person name="Fujita K."/>
            <person name="Isono K."/>
            <person name="Choi S."/>
            <person name="Ohtsubo E."/>
            <person name="Baba T."/>
            <person name="Wanner B.L."/>
            <person name="Mori H."/>
            <person name="Horiuchi T."/>
        </authorList>
    </citation>
    <scope>NUCLEOTIDE SEQUENCE [LARGE SCALE GENOMIC DNA]</scope>
    <source>
        <strain>K12 / W3110 / ATCC 27325 / DSM 5911</strain>
    </source>
</reference>
<reference key="5">
    <citation type="journal article" date="1995" name="Recept. Channels">
        <title>Molecular genetics of a receptor protein for D-xylose, encoded by the gene xylF, in Escherichia coli.</title>
        <authorList>
            <person name="Sumiya M."/>
            <person name="Davis E.O."/>
            <person name="Packman L.C."/>
            <person name="McDonald T.P."/>
            <person name="Henderson P.J."/>
        </authorList>
    </citation>
    <scope>PROTEIN SEQUENCE OF 24-71</scope>
</reference>
<reference key="6">
    <citation type="journal article" date="1997" name="Electrophoresis">
        <title>Comparing the predicted and observed properties of proteins encoded in the genome of Escherichia coli K-12.</title>
        <authorList>
            <person name="Link A.J."/>
            <person name="Robison K."/>
            <person name="Church G.M."/>
        </authorList>
    </citation>
    <scope>PROTEIN SEQUENCE OF 24-35</scope>
    <source>
        <strain>K12 / EMG2</strain>
    </source>
</reference>
<reference key="7">
    <citation type="journal article" date="1997" name="Electrophoresis">
        <title>Escherichia coli proteome analysis using the gene-protein database.</title>
        <authorList>
            <person name="VanBogelen R.A."/>
            <person name="Abshire K.Z."/>
            <person name="Moldover B."/>
            <person name="Olson E.R."/>
            <person name="Neidhardt F.C."/>
        </authorList>
    </citation>
    <scope>IDENTIFICATION BY 2D-GEL</scope>
</reference>
<feature type="signal peptide" evidence="1 2 3">
    <location>
        <begin position="1"/>
        <end position="23"/>
    </location>
</feature>
<feature type="chain" id="PRO_0000031738" description="D-xylose-binding periplasmic protein">
    <location>
        <begin position="24"/>
        <end position="330"/>
    </location>
</feature>
<feature type="strand" evidence="5">
    <location>
        <begin position="27"/>
        <end position="33"/>
    </location>
</feature>
<feature type="strand" evidence="5">
    <location>
        <begin position="36"/>
        <end position="38"/>
    </location>
</feature>
<feature type="helix" evidence="5">
    <location>
        <begin position="41"/>
        <end position="53"/>
    </location>
</feature>
<feature type="strand" evidence="5">
    <location>
        <begin position="57"/>
        <end position="62"/>
    </location>
</feature>
<feature type="helix" evidence="5">
    <location>
        <begin position="67"/>
        <end position="79"/>
    </location>
</feature>
<feature type="strand" evidence="5">
    <location>
        <begin position="83"/>
        <end position="88"/>
    </location>
</feature>
<feature type="helix" evidence="5">
    <location>
        <begin position="96"/>
        <end position="103"/>
    </location>
</feature>
<feature type="turn" evidence="5">
    <location>
        <begin position="104"/>
        <end position="106"/>
    </location>
</feature>
<feature type="strand" evidence="5">
    <location>
        <begin position="108"/>
        <end position="114"/>
    </location>
</feature>
<feature type="strand" evidence="5">
    <location>
        <begin position="122"/>
        <end position="127"/>
    </location>
</feature>
<feature type="helix" evidence="5">
    <location>
        <begin position="129"/>
        <end position="143"/>
    </location>
</feature>
<feature type="strand" evidence="5">
    <location>
        <begin position="145"/>
        <end position="154"/>
    </location>
</feature>
<feature type="helix" evidence="5">
    <location>
        <begin position="159"/>
        <end position="177"/>
    </location>
</feature>
<feature type="strand" evidence="5">
    <location>
        <begin position="180"/>
        <end position="188"/>
    </location>
</feature>
<feature type="helix" evidence="5">
    <location>
        <begin position="190"/>
        <end position="192"/>
    </location>
</feature>
<feature type="helix" evidence="5">
    <location>
        <begin position="194"/>
        <end position="207"/>
    </location>
</feature>
<feature type="turn" evidence="5">
    <location>
        <begin position="208"/>
        <end position="210"/>
    </location>
</feature>
<feature type="strand" evidence="5">
    <location>
        <begin position="214"/>
        <end position="219"/>
    </location>
</feature>
<feature type="helix" evidence="5">
    <location>
        <begin position="220"/>
        <end position="231"/>
    </location>
</feature>
<feature type="turn" evidence="5">
    <location>
        <begin position="232"/>
        <end position="234"/>
    </location>
</feature>
<feature type="turn" evidence="5">
    <location>
        <begin position="236"/>
        <end position="238"/>
    </location>
</feature>
<feature type="strand" evidence="5">
    <location>
        <begin position="239"/>
        <end position="241"/>
    </location>
</feature>
<feature type="helix" evidence="5">
    <location>
        <begin position="248"/>
        <end position="256"/>
    </location>
</feature>
<feature type="strand" evidence="5">
    <location>
        <begin position="262"/>
        <end position="264"/>
    </location>
</feature>
<feature type="helix" evidence="5">
    <location>
        <begin position="267"/>
        <end position="282"/>
    </location>
</feature>
<feature type="strand" evidence="5">
    <location>
        <begin position="290"/>
        <end position="294"/>
    </location>
</feature>
<feature type="strand" evidence="5">
    <location>
        <begin position="296"/>
        <end position="305"/>
    </location>
</feature>
<feature type="strand" evidence="5">
    <location>
        <begin position="308"/>
        <end position="310"/>
    </location>
</feature>
<feature type="turn" evidence="5">
    <location>
        <begin position="312"/>
        <end position="315"/>
    </location>
</feature>
<feature type="helix" evidence="5">
    <location>
        <begin position="316"/>
        <end position="320"/>
    </location>
</feature>
<feature type="turn" evidence="5">
    <location>
        <begin position="321"/>
        <end position="323"/>
    </location>
</feature>
<feature type="helix" evidence="5">
    <location>
        <begin position="327"/>
        <end position="329"/>
    </location>
</feature>
<comment type="function">
    <text>Involved in the high-affinity D-xylose membrane transport system. Binds with high affinity to xylose.</text>
</comment>
<comment type="subcellular location">
    <subcellularLocation>
        <location>Periplasm</location>
    </subcellularLocation>
</comment>
<comment type="miscellaneous">
    <text>E.coli has two D-xylose transport systems that accumulate sugar against a concentration gradient: the XylE system which utilizes the electrochemical gradient of protons and that is insensitive to cold osmotic shock and the XylF system that uses a high-energy phosphate compound and is sensitive to cold osmotic shock.</text>
</comment>
<comment type="similarity">
    <text evidence="4">Belongs to the bacterial solute-binding protein 2 family.</text>
</comment>
<organism>
    <name type="scientific">Escherichia coli (strain K12)</name>
    <dbReference type="NCBI Taxonomy" id="83333"/>
    <lineage>
        <taxon>Bacteria</taxon>
        <taxon>Pseudomonadati</taxon>
        <taxon>Pseudomonadota</taxon>
        <taxon>Gammaproteobacteria</taxon>
        <taxon>Enterobacterales</taxon>
        <taxon>Enterobacteriaceae</taxon>
        <taxon>Escherichia</taxon>
    </lineage>
</organism>
<name>XYLF_ECOLI</name>
<sequence length="330" mass="35734">MKIKNILLTLCTSLLLTNVAAHAKEVKIGMAIDDLRLERWQKDRDIFVKKAESLGAKVFVQSANGNEETQMSQIENMINRGVDVLVIIPYNGQVLSNVVKEAKQEGIKVLAYDRMINDADIDFYISFDNEKVGELQAKALVDIVPQGNYFLMGGSPVDNNAKLFRAGQMKVLKPYVDSGKIKVVGDQWVDGWLPENALKIMENALTANNNKIDAVVASNDATAGGAIQALSAQGLSGKVAISGQDADLAGIKRIAAGTQTMTVYKPITLLANTAAEIAVELGNGQEPKADTTLNNGLKDVPSRLLTPIDVNKNNIKDTVIKDGFHKESEL</sequence>
<accession>P37387</accession>
<accession>Q2M7M9</accession>
<dbReference type="EMBL" id="U00039">
    <property type="protein sequence ID" value="AAB18543.1"/>
    <property type="molecule type" value="Genomic_DNA"/>
</dbReference>
<dbReference type="EMBL" id="U00096">
    <property type="protein sequence ID" value="AAC76590.1"/>
    <property type="molecule type" value="Genomic_DNA"/>
</dbReference>
<dbReference type="EMBL" id="AP009048">
    <property type="protein sequence ID" value="BAE77727.1"/>
    <property type="molecule type" value="Genomic_DNA"/>
</dbReference>
<dbReference type="PIR" id="S47787">
    <property type="entry name" value="S47787"/>
</dbReference>
<dbReference type="RefSeq" id="NP_418023.1">
    <property type="nucleotide sequence ID" value="NC_000913.3"/>
</dbReference>
<dbReference type="RefSeq" id="WP_000694881.1">
    <property type="nucleotide sequence ID" value="NZ_SSZK01000041.1"/>
</dbReference>
<dbReference type="PDB" id="3M9W">
    <property type="method" value="X-ray"/>
    <property type="resolution" value="2.15 A"/>
    <property type="chains" value="A=24-330"/>
</dbReference>
<dbReference type="PDB" id="3M9X">
    <property type="method" value="X-ray"/>
    <property type="resolution" value="2.20 A"/>
    <property type="chains" value="A=24-330"/>
</dbReference>
<dbReference type="PDB" id="3MA0">
    <property type="method" value="X-ray"/>
    <property type="resolution" value="2.20 A"/>
    <property type="chains" value="A/B/C=24-330"/>
</dbReference>
<dbReference type="PDBsum" id="3M9W"/>
<dbReference type="PDBsum" id="3M9X"/>
<dbReference type="PDBsum" id="3MA0"/>
<dbReference type="SMR" id="P37387"/>
<dbReference type="BioGRID" id="4262541">
    <property type="interactions" value="32"/>
</dbReference>
<dbReference type="BioGRID" id="852398">
    <property type="interactions" value="1"/>
</dbReference>
<dbReference type="ComplexPortal" id="CPX-4388">
    <property type="entry name" value="Xylose ABC transporter complex"/>
</dbReference>
<dbReference type="FunCoup" id="P37387">
    <property type="interactions" value="252"/>
</dbReference>
<dbReference type="IntAct" id="P37387">
    <property type="interactions" value="4"/>
</dbReference>
<dbReference type="STRING" id="511145.b3566"/>
<dbReference type="TCDB" id="3.A.1.2.4">
    <property type="family name" value="the atp-binding cassette (abc) superfamily"/>
</dbReference>
<dbReference type="jPOST" id="P37387"/>
<dbReference type="PaxDb" id="511145-b3566"/>
<dbReference type="EnsemblBacteria" id="AAC76590">
    <property type="protein sequence ID" value="AAC76590"/>
    <property type="gene ID" value="b3566"/>
</dbReference>
<dbReference type="GeneID" id="86862023"/>
<dbReference type="GeneID" id="948090"/>
<dbReference type="KEGG" id="ecj:JW3538"/>
<dbReference type="KEGG" id="eco:b3566"/>
<dbReference type="KEGG" id="ecoc:C3026_19335"/>
<dbReference type="PATRIC" id="fig|1411691.4.peg.3146"/>
<dbReference type="EchoBASE" id="EB4153"/>
<dbReference type="eggNOG" id="COG4213">
    <property type="taxonomic scope" value="Bacteria"/>
</dbReference>
<dbReference type="HOGENOM" id="CLU_037628_13_0_6"/>
<dbReference type="InParanoid" id="P37387"/>
<dbReference type="OMA" id="QQWVPEW"/>
<dbReference type="OrthoDB" id="9773673at2"/>
<dbReference type="PhylomeDB" id="P37387"/>
<dbReference type="BioCyc" id="EcoCyc:XYLF-MONOMER"/>
<dbReference type="BioCyc" id="MetaCyc:XYLF-MONOMER"/>
<dbReference type="EvolutionaryTrace" id="P37387"/>
<dbReference type="PRO" id="PR:P37387"/>
<dbReference type="Proteomes" id="UP000000625">
    <property type="component" value="Chromosome"/>
</dbReference>
<dbReference type="GO" id="GO:0055052">
    <property type="term" value="C:ATP-binding cassette (ABC) transporter complex, substrate-binding subunit-containing"/>
    <property type="evidence" value="ECO:0000303"/>
    <property type="project" value="ComplexPortal"/>
</dbReference>
<dbReference type="GO" id="GO:0016020">
    <property type="term" value="C:membrane"/>
    <property type="evidence" value="ECO:0000303"/>
    <property type="project" value="ComplexPortal"/>
</dbReference>
<dbReference type="GO" id="GO:0030288">
    <property type="term" value="C:outer membrane-bounded periplasmic space"/>
    <property type="evidence" value="ECO:0000314"/>
    <property type="project" value="EcoCyc"/>
</dbReference>
<dbReference type="GO" id="GO:0030246">
    <property type="term" value="F:carbohydrate binding"/>
    <property type="evidence" value="ECO:0000318"/>
    <property type="project" value="GO_Central"/>
</dbReference>
<dbReference type="GO" id="GO:0048029">
    <property type="term" value="F:monosaccharide binding"/>
    <property type="evidence" value="ECO:0000315"/>
    <property type="project" value="EcoCyc"/>
</dbReference>
<dbReference type="GO" id="GO:0015752">
    <property type="term" value="P:D-ribose transmembrane transport"/>
    <property type="evidence" value="ECO:0000269"/>
    <property type="project" value="EcoCyc"/>
</dbReference>
<dbReference type="GO" id="GO:0042732">
    <property type="term" value="P:D-xylose metabolic process"/>
    <property type="evidence" value="ECO:0000315"/>
    <property type="project" value="EcoCyc"/>
</dbReference>
<dbReference type="GO" id="GO:0015753">
    <property type="term" value="P:D-xylose transmembrane transport"/>
    <property type="evidence" value="ECO:0000315"/>
    <property type="project" value="EcoCyc"/>
</dbReference>
<dbReference type="CDD" id="cd19991">
    <property type="entry name" value="PBP1_ABC_xylose_binding"/>
    <property type="match status" value="1"/>
</dbReference>
<dbReference type="FunFam" id="3.40.50.2300:FF:000078">
    <property type="entry name" value="D-xylose ABC transporter substrate-binding protein"/>
    <property type="match status" value="1"/>
</dbReference>
<dbReference type="Gene3D" id="3.40.50.2300">
    <property type="match status" value="2"/>
</dbReference>
<dbReference type="InterPro" id="IPR050555">
    <property type="entry name" value="Bact_Solute-Bind_Prot2"/>
</dbReference>
<dbReference type="InterPro" id="IPR028082">
    <property type="entry name" value="Peripla_BP_I"/>
</dbReference>
<dbReference type="InterPro" id="IPR025997">
    <property type="entry name" value="SBP_2_dom"/>
</dbReference>
<dbReference type="InterPro" id="IPR013456">
    <property type="entry name" value="XylF"/>
</dbReference>
<dbReference type="NCBIfam" id="NF007680">
    <property type="entry name" value="PRK10355.1"/>
    <property type="match status" value="1"/>
</dbReference>
<dbReference type="NCBIfam" id="TIGR02634">
    <property type="entry name" value="xylF"/>
    <property type="match status" value="1"/>
</dbReference>
<dbReference type="PANTHER" id="PTHR30036">
    <property type="entry name" value="D-XYLOSE-BINDING PERIPLASMIC PROTEIN"/>
    <property type="match status" value="1"/>
</dbReference>
<dbReference type="PANTHER" id="PTHR30036:SF1">
    <property type="entry name" value="D-XYLOSE-BINDING PERIPLASMIC PROTEIN"/>
    <property type="match status" value="1"/>
</dbReference>
<dbReference type="Pfam" id="PF13407">
    <property type="entry name" value="Peripla_BP_4"/>
    <property type="match status" value="1"/>
</dbReference>
<dbReference type="SUPFAM" id="SSF53822">
    <property type="entry name" value="Periplasmic binding protein-like I"/>
    <property type="match status" value="1"/>
</dbReference>
<proteinExistence type="evidence at protein level"/>
<keyword id="KW-0002">3D-structure</keyword>
<keyword id="KW-0903">Direct protein sequencing</keyword>
<keyword id="KW-0574">Periplasm</keyword>
<keyword id="KW-1185">Reference proteome</keyword>
<keyword id="KW-0732">Signal</keyword>
<keyword id="KW-0762">Sugar transport</keyword>
<keyword id="KW-0813">Transport</keyword>